<feature type="chain" id="PRO_0000224703" description="UDP-N-acetylenolpyruvoylglucosamine reductase">
    <location>
        <begin position="1"/>
        <end position="346"/>
    </location>
</feature>
<feature type="domain" description="FAD-binding PCMH-type" evidence="1">
    <location>
        <begin position="17"/>
        <end position="187"/>
    </location>
</feature>
<feature type="active site" evidence="1">
    <location>
        <position position="163"/>
    </location>
</feature>
<feature type="active site" description="Proton donor" evidence="1">
    <location>
        <position position="233"/>
    </location>
</feature>
<feature type="active site" evidence="1">
    <location>
        <position position="329"/>
    </location>
</feature>
<evidence type="ECO:0000255" key="1">
    <source>
        <dbReference type="HAMAP-Rule" id="MF_00037"/>
    </source>
</evidence>
<proteinExistence type="inferred from homology"/>
<organism>
    <name type="scientific">Photobacterium profundum (strain SS9)</name>
    <dbReference type="NCBI Taxonomy" id="298386"/>
    <lineage>
        <taxon>Bacteria</taxon>
        <taxon>Pseudomonadati</taxon>
        <taxon>Pseudomonadota</taxon>
        <taxon>Gammaproteobacteria</taxon>
        <taxon>Vibrionales</taxon>
        <taxon>Vibrionaceae</taxon>
        <taxon>Photobacterium</taxon>
    </lineage>
</organism>
<dbReference type="EC" id="1.3.1.98" evidence="1"/>
<dbReference type="EMBL" id="CR378674">
    <property type="protein sequence ID" value="CAG21726.1"/>
    <property type="molecule type" value="Genomic_DNA"/>
</dbReference>
<dbReference type="RefSeq" id="WP_011219967.1">
    <property type="nucleotide sequence ID" value="NC_006370.1"/>
</dbReference>
<dbReference type="SMR" id="Q6LLV2"/>
<dbReference type="STRING" id="298386.PBPRA3446"/>
<dbReference type="KEGG" id="ppr:PBPRA3446"/>
<dbReference type="eggNOG" id="COG0812">
    <property type="taxonomic scope" value="Bacteria"/>
</dbReference>
<dbReference type="HOGENOM" id="CLU_035304_0_0_6"/>
<dbReference type="UniPathway" id="UPA00219"/>
<dbReference type="Proteomes" id="UP000000593">
    <property type="component" value="Chromosome 1"/>
</dbReference>
<dbReference type="GO" id="GO:0005829">
    <property type="term" value="C:cytosol"/>
    <property type="evidence" value="ECO:0007669"/>
    <property type="project" value="TreeGrafter"/>
</dbReference>
<dbReference type="GO" id="GO:0071949">
    <property type="term" value="F:FAD binding"/>
    <property type="evidence" value="ECO:0007669"/>
    <property type="project" value="InterPro"/>
</dbReference>
<dbReference type="GO" id="GO:0008762">
    <property type="term" value="F:UDP-N-acetylmuramate dehydrogenase activity"/>
    <property type="evidence" value="ECO:0007669"/>
    <property type="project" value="UniProtKB-UniRule"/>
</dbReference>
<dbReference type="GO" id="GO:0051301">
    <property type="term" value="P:cell division"/>
    <property type="evidence" value="ECO:0007669"/>
    <property type="project" value="UniProtKB-KW"/>
</dbReference>
<dbReference type="GO" id="GO:0071555">
    <property type="term" value="P:cell wall organization"/>
    <property type="evidence" value="ECO:0007669"/>
    <property type="project" value="UniProtKB-KW"/>
</dbReference>
<dbReference type="GO" id="GO:0009252">
    <property type="term" value="P:peptidoglycan biosynthetic process"/>
    <property type="evidence" value="ECO:0007669"/>
    <property type="project" value="UniProtKB-UniRule"/>
</dbReference>
<dbReference type="GO" id="GO:0008360">
    <property type="term" value="P:regulation of cell shape"/>
    <property type="evidence" value="ECO:0007669"/>
    <property type="project" value="UniProtKB-KW"/>
</dbReference>
<dbReference type="Gene3D" id="3.30.465.10">
    <property type="match status" value="1"/>
</dbReference>
<dbReference type="Gene3D" id="3.90.78.10">
    <property type="entry name" value="UDP-N-acetylenolpyruvoylglucosamine reductase, C-terminal domain"/>
    <property type="match status" value="1"/>
</dbReference>
<dbReference type="Gene3D" id="3.30.43.10">
    <property type="entry name" value="Uridine Diphospho-n-acetylenolpyruvylglucosamine Reductase, domain 2"/>
    <property type="match status" value="1"/>
</dbReference>
<dbReference type="HAMAP" id="MF_00037">
    <property type="entry name" value="MurB"/>
    <property type="match status" value="1"/>
</dbReference>
<dbReference type="InterPro" id="IPR016166">
    <property type="entry name" value="FAD-bd_PCMH"/>
</dbReference>
<dbReference type="InterPro" id="IPR036318">
    <property type="entry name" value="FAD-bd_PCMH-like_sf"/>
</dbReference>
<dbReference type="InterPro" id="IPR016167">
    <property type="entry name" value="FAD-bd_PCMH_sub1"/>
</dbReference>
<dbReference type="InterPro" id="IPR016169">
    <property type="entry name" value="FAD-bd_PCMH_sub2"/>
</dbReference>
<dbReference type="InterPro" id="IPR003170">
    <property type="entry name" value="MurB"/>
</dbReference>
<dbReference type="InterPro" id="IPR011601">
    <property type="entry name" value="MurB_C"/>
</dbReference>
<dbReference type="InterPro" id="IPR036635">
    <property type="entry name" value="MurB_C_sf"/>
</dbReference>
<dbReference type="InterPro" id="IPR006094">
    <property type="entry name" value="Oxid_FAD_bind_N"/>
</dbReference>
<dbReference type="NCBIfam" id="TIGR00179">
    <property type="entry name" value="murB"/>
    <property type="match status" value="1"/>
</dbReference>
<dbReference type="NCBIfam" id="NF000755">
    <property type="entry name" value="PRK00046.1"/>
    <property type="match status" value="1"/>
</dbReference>
<dbReference type="PANTHER" id="PTHR21071">
    <property type="entry name" value="UDP-N-ACETYLENOLPYRUVOYLGLUCOSAMINE REDUCTASE"/>
    <property type="match status" value="1"/>
</dbReference>
<dbReference type="PANTHER" id="PTHR21071:SF4">
    <property type="entry name" value="UDP-N-ACETYLENOLPYRUVOYLGLUCOSAMINE REDUCTASE"/>
    <property type="match status" value="1"/>
</dbReference>
<dbReference type="Pfam" id="PF01565">
    <property type="entry name" value="FAD_binding_4"/>
    <property type="match status" value="1"/>
</dbReference>
<dbReference type="Pfam" id="PF02873">
    <property type="entry name" value="MurB_C"/>
    <property type="match status" value="1"/>
</dbReference>
<dbReference type="SUPFAM" id="SSF56176">
    <property type="entry name" value="FAD-binding/transporter-associated domain-like"/>
    <property type="match status" value="1"/>
</dbReference>
<dbReference type="SUPFAM" id="SSF56194">
    <property type="entry name" value="Uridine diphospho-N-Acetylenolpyruvylglucosamine reductase, MurB, C-terminal domain"/>
    <property type="match status" value="1"/>
</dbReference>
<dbReference type="PROSITE" id="PS51387">
    <property type="entry name" value="FAD_PCMH"/>
    <property type="match status" value="1"/>
</dbReference>
<comment type="function">
    <text evidence="1">Cell wall formation.</text>
</comment>
<comment type="catalytic activity">
    <reaction evidence="1">
        <text>UDP-N-acetyl-alpha-D-muramate + NADP(+) = UDP-N-acetyl-3-O-(1-carboxyvinyl)-alpha-D-glucosamine + NADPH + H(+)</text>
        <dbReference type="Rhea" id="RHEA:12248"/>
        <dbReference type="ChEBI" id="CHEBI:15378"/>
        <dbReference type="ChEBI" id="CHEBI:57783"/>
        <dbReference type="ChEBI" id="CHEBI:58349"/>
        <dbReference type="ChEBI" id="CHEBI:68483"/>
        <dbReference type="ChEBI" id="CHEBI:70757"/>
        <dbReference type="EC" id="1.3.1.98"/>
    </reaction>
</comment>
<comment type="cofactor">
    <cofactor evidence="1">
        <name>FAD</name>
        <dbReference type="ChEBI" id="CHEBI:57692"/>
    </cofactor>
</comment>
<comment type="pathway">
    <text evidence="1">Cell wall biogenesis; peptidoglycan biosynthesis.</text>
</comment>
<comment type="subcellular location">
    <subcellularLocation>
        <location evidence="1">Cytoplasm</location>
    </subcellularLocation>
</comment>
<comment type="similarity">
    <text evidence="1">Belongs to the MurB family.</text>
</comment>
<accession>Q6LLV2</accession>
<keyword id="KW-0131">Cell cycle</keyword>
<keyword id="KW-0132">Cell division</keyword>
<keyword id="KW-0133">Cell shape</keyword>
<keyword id="KW-0961">Cell wall biogenesis/degradation</keyword>
<keyword id="KW-0963">Cytoplasm</keyword>
<keyword id="KW-0274">FAD</keyword>
<keyword id="KW-0285">Flavoprotein</keyword>
<keyword id="KW-0521">NADP</keyword>
<keyword id="KW-0560">Oxidoreductase</keyword>
<keyword id="KW-0573">Peptidoglycan synthesis</keyword>
<keyword id="KW-1185">Reference proteome</keyword>
<name>MURB_PHOPR</name>
<reference key="1">
    <citation type="journal article" date="2005" name="Science">
        <title>Life at depth: Photobacterium profundum genome sequence and expression analysis.</title>
        <authorList>
            <person name="Vezzi A."/>
            <person name="Campanaro S."/>
            <person name="D'Angelo M."/>
            <person name="Simonato F."/>
            <person name="Vitulo N."/>
            <person name="Lauro F.M."/>
            <person name="Cestaro A."/>
            <person name="Malacrida G."/>
            <person name="Simionati B."/>
            <person name="Cannata N."/>
            <person name="Romualdi C."/>
            <person name="Bartlett D.H."/>
            <person name="Valle G."/>
        </authorList>
    </citation>
    <scope>NUCLEOTIDE SEQUENCE [LARGE SCALE GENOMIC DNA]</scope>
    <source>
        <strain>ATCC BAA-1253 / SS9</strain>
    </source>
</reference>
<gene>
    <name evidence="1" type="primary">murB</name>
    <name type="ordered locus">PBPRA3446</name>
</gene>
<protein>
    <recommendedName>
        <fullName evidence="1">UDP-N-acetylenolpyruvoylglucosamine reductase</fullName>
        <ecNumber evidence="1">1.3.1.98</ecNumber>
    </recommendedName>
    <alternativeName>
        <fullName evidence="1">UDP-N-acetylmuramate dehydrogenase</fullName>
    </alternativeName>
</protein>
<sequence length="346" mass="38424">MRILQETSLAAFHTFGIESQAYALIEAESVDDLLLIWRDKQYQTLPKLVLGKGSNLLFCDDFSGVVVLNRIKGITVNETQESYLLHVGAGEDWHGFVQWTIEHNMPGLENLALIPGCVGSSPIQNIGAYGVELQDICQYVDILNIDSGEVSRLSRKECQFGYRDSVFKHELKETHIIVAVGFTLKKEWEPKTTYGPLAELNKTTVAAIDVFNAVCRIRQSKLPDPQVLGNAGSFFKNPVITQSIKDALLYQYPQMPNYKVSNLEYKLAAGWLIDQCDLKGMQIGGAKVHEQQALVLVNTGNATARDVLLLAQHVVNAVNDKFGVLLEHEVRFMGASKETTLSEVLA</sequence>